<sequence>MSKDELKDKKRKVEDEELKSKKKLKKDKKDKKDKKDKKDKKDKKEKKEKKEKKDKKSETESFAASASQSDIDEFLKENEVTVSDPSGSNIVPYLDFSQVSFIDQIQKEISKFPKPTPIQAVSWPYLLAGKDVIGIAETGSGKTFAFGVPAINNIVTSGDKSSSVKVLVISPTRELASQIYDNLIVLTDACGLRSCCVYGGVPKDQQREDLRRSQVVVATPGRLLDLIEEGSVDLSHVNYLVLDEADRMLEKGFEEDIKKIIRQTRSTSRQTLMFTATWPKEVRELASSFMSEPVKVSIGNRDELSANKRITQIVEVVDPFRKEKKLLELLKKYHSGPTKNDKVLIFALYKKEASRVERNLKYNGYDVAAIHGDLSQQQRTQALNEFKAGKCNLLLATDVAARGLDIPNVKTVINLTFPLTVEDYVHRIGRTGRAGQYGTAHTLFTEQEKHLAGALVNVLNGAGQPVPEELKKFGTHTKKKEHSAYGAFFKDVDLSKKPKKITFD</sequence>
<comment type="function">
    <text evidence="1">ATP-dependent RNA helicase required for 60S ribosomal subunit synthesis. Involved in efficient pre-rRNA processing, predominantly at site A3, which is necessary for the normal formation of 25S and 5.8S rRNAs (By similarity).</text>
</comment>
<comment type="catalytic activity">
    <reaction>
        <text>ATP + H2O = ADP + phosphate + H(+)</text>
        <dbReference type="Rhea" id="RHEA:13065"/>
        <dbReference type="ChEBI" id="CHEBI:15377"/>
        <dbReference type="ChEBI" id="CHEBI:15378"/>
        <dbReference type="ChEBI" id="CHEBI:30616"/>
        <dbReference type="ChEBI" id="CHEBI:43474"/>
        <dbReference type="ChEBI" id="CHEBI:456216"/>
        <dbReference type="EC" id="3.6.4.13"/>
    </reaction>
</comment>
<comment type="subcellular location">
    <subcellularLocation>
        <location evidence="1">Nucleus</location>
        <location evidence="1">Nucleolus</location>
    </subcellularLocation>
</comment>
<comment type="domain">
    <text>The Q motif is unique to and characteristic of the DEAD box family of RNA helicases and controls ATP binding and hydrolysis.</text>
</comment>
<comment type="similarity">
    <text evidence="5">Belongs to the DEAD box helicase family. DDX5/DBP2 subfamily.</text>
</comment>
<gene>
    <name type="primary">DBP3</name>
    <name type="ordered locus">KLLA0C15499g</name>
</gene>
<accession>Q6CT46</accession>
<organism>
    <name type="scientific">Kluyveromyces lactis (strain ATCC 8585 / CBS 2359 / DSM 70799 / NBRC 1267 / NRRL Y-1140 / WM37)</name>
    <name type="common">Yeast</name>
    <name type="synonym">Candida sphaerica</name>
    <dbReference type="NCBI Taxonomy" id="284590"/>
    <lineage>
        <taxon>Eukaryota</taxon>
        <taxon>Fungi</taxon>
        <taxon>Dikarya</taxon>
        <taxon>Ascomycota</taxon>
        <taxon>Saccharomycotina</taxon>
        <taxon>Saccharomycetes</taxon>
        <taxon>Saccharomycetales</taxon>
        <taxon>Saccharomycetaceae</taxon>
        <taxon>Kluyveromyces</taxon>
    </lineage>
</organism>
<reference key="1">
    <citation type="journal article" date="2004" name="Nature">
        <title>Genome evolution in yeasts.</title>
        <authorList>
            <person name="Dujon B."/>
            <person name="Sherman D."/>
            <person name="Fischer G."/>
            <person name="Durrens P."/>
            <person name="Casaregola S."/>
            <person name="Lafontaine I."/>
            <person name="de Montigny J."/>
            <person name="Marck C."/>
            <person name="Neuveglise C."/>
            <person name="Talla E."/>
            <person name="Goffard N."/>
            <person name="Frangeul L."/>
            <person name="Aigle M."/>
            <person name="Anthouard V."/>
            <person name="Babour A."/>
            <person name="Barbe V."/>
            <person name="Barnay S."/>
            <person name="Blanchin S."/>
            <person name="Beckerich J.-M."/>
            <person name="Beyne E."/>
            <person name="Bleykasten C."/>
            <person name="Boisrame A."/>
            <person name="Boyer J."/>
            <person name="Cattolico L."/>
            <person name="Confanioleri F."/>
            <person name="de Daruvar A."/>
            <person name="Despons L."/>
            <person name="Fabre E."/>
            <person name="Fairhead C."/>
            <person name="Ferry-Dumazet H."/>
            <person name="Groppi A."/>
            <person name="Hantraye F."/>
            <person name="Hennequin C."/>
            <person name="Jauniaux N."/>
            <person name="Joyet P."/>
            <person name="Kachouri R."/>
            <person name="Kerrest A."/>
            <person name="Koszul R."/>
            <person name="Lemaire M."/>
            <person name="Lesur I."/>
            <person name="Ma L."/>
            <person name="Muller H."/>
            <person name="Nicaud J.-M."/>
            <person name="Nikolski M."/>
            <person name="Oztas S."/>
            <person name="Ozier-Kalogeropoulos O."/>
            <person name="Pellenz S."/>
            <person name="Potier S."/>
            <person name="Richard G.-F."/>
            <person name="Straub M.-L."/>
            <person name="Suleau A."/>
            <person name="Swennen D."/>
            <person name="Tekaia F."/>
            <person name="Wesolowski-Louvel M."/>
            <person name="Westhof E."/>
            <person name="Wirth B."/>
            <person name="Zeniou-Meyer M."/>
            <person name="Zivanovic Y."/>
            <person name="Bolotin-Fukuhara M."/>
            <person name="Thierry A."/>
            <person name="Bouchier C."/>
            <person name="Caudron B."/>
            <person name="Scarpelli C."/>
            <person name="Gaillardin C."/>
            <person name="Weissenbach J."/>
            <person name="Wincker P."/>
            <person name="Souciet J.-L."/>
        </authorList>
    </citation>
    <scope>NUCLEOTIDE SEQUENCE [LARGE SCALE GENOMIC DNA]</scope>
    <source>
        <strain>ATCC 8585 / CBS 2359 / DSM 70799 / NBRC 1267 / NRRL Y-1140 / WM37</strain>
    </source>
</reference>
<feature type="chain" id="PRO_0000232180" description="ATP-dependent RNA helicase DBP3">
    <location>
        <begin position="1"/>
        <end position="504"/>
    </location>
</feature>
<feature type="domain" description="Helicase ATP-binding" evidence="2">
    <location>
        <begin position="123"/>
        <end position="296"/>
    </location>
</feature>
<feature type="domain" description="Helicase C-terminal" evidence="3">
    <location>
        <begin position="325"/>
        <end position="474"/>
    </location>
</feature>
<feature type="region of interest" description="Disordered" evidence="4">
    <location>
        <begin position="1"/>
        <end position="65"/>
    </location>
</feature>
<feature type="short sequence motif" description="Q motif">
    <location>
        <begin position="94"/>
        <end position="120"/>
    </location>
</feature>
<feature type="short sequence motif" description="DEAD box">
    <location>
        <begin position="243"/>
        <end position="246"/>
    </location>
</feature>
<feature type="compositionally biased region" description="Basic and acidic residues" evidence="4">
    <location>
        <begin position="1"/>
        <end position="14"/>
    </location>
</feature>
<feature type="compositionally biased region" description="Basic residues" evidence="4">
    <location>
        <begin position="20"/>
        <end position="53"/>
    </location>
</feature>
<feature type="binding site" evidence="2">
    <location>
        <begin position="136"/>
        <end position="143"/>
    </location>
    <ligand>
        <name>ATP</name>
        <dbReference type="ChEBI" id="CHEBI:30616"/>
    </ligand>
</feature>
<keyword id="KW-0067">ATP-binding</keyword>
<keyword id="KW-0347">Helicase</keyword>
<keyword id="KW-0378">Hydrolase</keyword>
<keyword id="KW-0547">Nucleotide-binding</keyword>
<keyword id="KW-0539">Nucleus</keyword>
<keyword id="KW-1185">Reference proteome</keyword>
<keyword id="KW-0690">Ribosome biogenesis</keyword>
<keyword id="KW-0694">RNA-binding</keyword>
<keyword id="KW-0698">rRNA processing</keyword>
<name>DBP3_KLULA</name>
<dbReference type="EC" id="3.6.4.13"/>
<dbReference type="EMBL" id="CR382123">
    <property type="protein sequence ID" value="CAH01744.1"/>
    <property type="molecule type" value="Genomic_DNA"/>
</dbReference>
<dbReference type="RefSeq" id="XP_452893.1">
    <property type="nucleotide sequence ID" value="XM_452893.1"/>
</dbReference>
<dbReference type="SMR" id="Q6CT46"/>
<dbReference type="FunCoup" id="Q6CT46">
    <property type="interactions" value="446"/>
</dbReference>
<dbReference type="STRING" id="284590.Q6CT46"/>
<dbReference type="PaxDb" id="284590-Q6CT46"/>
<dbReference type="KEGG" id="kla:KLLA0_C15499g"/>
<dbReference type="eggNOG" id="KOG0331">
    <property type="taxonomic scope" value="Eukaryota"/>
</dbReference>
<dbReference type="HOGENOM" id="CLU_003041_1_5_1"/>
<dbReference type="InParanoid" id="Q6CT46"/>
<dbReference type="OMA" id="KKTHDMY"/>
<dbReference type="Proteomes" id="UP000000598">
    <property type="component" value="Chromosome C"/>
</dbReference>
<dbReference type="GO" id="GO:0005730">
    <property type="term" value="C:nucleolus"/>
    <property type="evidence" value="ECO:0007669"/>
    <property type="project" value="UniProtKB-SubCell"/>
</dbReference>
<dbReference type="GO" id="GO:0005524">
    <property type="term" value="F:ATP binding"/>
    <property type="evidence" value="ECO:0007669"/>
    <property type="project" value="UniProtKB-KW"/>
</dbReference>
<dbReference type="GO" id="GO:0016887">
    <property type="term" value="F:ATP hydrolysis activity"/>
    <property type="evidence" value="ECO:0007669"/>
    <property type="project" value="RHEA"/>
</dbReference>
<dbReference type="GO" id="GO:0003723">
    <property type="term" value="F:RNA binding"/>
    <property type="evidence" value="ECO:0007669"/>
    <property type="project" value="UniProtKB-KW"/>
</dbReference>
<dbReference type="GO" id="GO:0003724">
    <property type="term" value="F:RNA helicase activity"/>
    <property type="evidence" value="ECO:0007669"/>
    <property type="project" value="UniProtKB-EC"/>
</dbReference>
<dbReference type="GO" id="GO:0006364">
    <property type="term" value="P:rRNA processing"/>
    <property type="evidence" value="ECO:0007669"/>
    <property type="project" value="UniProtKB-KW"/>
</dbReference>
<dbReference type="CDD" id="cd00268">
    <property type="entry name" value="DEADc"/>
    <property type="match status" value="1"/>
</dbReference>
<dbReference type="CDD" id="cd18787">
    <property type="entry name" value="SF2_C_DEAD"/>
    <property type="match status" value="1"/>
</dbReference>
<dbReference type="FunFam" id="3.40.50.300:FF:000008">
    <property type="entry name" value="ATP-dependent RNA helicase RhlB"/>
    <property type="match status" value="1"/>
</dbReference>
<dbReference type="Gene3D" id="3.40.50.300">
    <property type="entry name" value="P-loop containing nucleotide triphosphate hydrolases"/>
    <property type="match status" value="2"/>
</dbReference>
<dbReference type="InterPro" id="IPR011545">
    <property type="entry name" value="DEAD/DEAH_box_helicase_dom"/>
</dbReference>
<dbReference type="InterPro" id="IPR014001">
    <property type="entry name" value="Helicase_ATP-bd"/>
</dbReference>
<dbReference type="InterPro" id="IPR001650">
    <property type="entry name" value="Helicase_C-like"/>
</dbReference>
<dbReference type="InterPro" id="IPR027417">
    <property type="entry name" value="P-loop_NTPase"/>
</dbReference>
<dbReference type="InterPro" id="IPR000629">
    <property type="entry name" value="RNA-helicase_DEAD-box_CS"/>
</dbReference>
<dbReference type="PANTHER" id="PTHR47958">
    <property type="entry name" value="ATP-DEPENDENT RNA HELICASE DBP3"/>
    <property type="match status" value="1"/>
</dbReference>
<dbReference type="Pfam" id="PF00270">
    <property type="entry name" value="DEAD"/>
    <property type="match status" value="1"/>
</dbReference>
<dbReference type="Pfam" id="PF00271">
    <property type="entry name" value="Helicase_C"/>
    <property type="match status" value="1"/>
</dbReference>
<dbReference type="SMART" id="SM00487">
    <property type="entry name" value="DEXDc"/>
    <property type="match status" value="1"/>
</dbReference>
<dbReference type="SMART" id="SM00490">
    <property type="entry name" value="HELICc"/>
    <property type="match status" value="1"/>
</dbReference>
<dbReference type="SUPFAM" id="SSF52540">
    <property type="entry name" value="P-loop containing nucleoside triphosphate hydrolases"/>
    <property type="match status" value="1"/>
</dbReference>
<dbReference type="PROSITE" id="PS00039">
    <property type="entry name" value="DEAD_ATP_HELICASE"/>
    <property type="match status" value="1"/>
</dbReference>
<dbReference type="PROSITE" id="PS51192">
    <property type="entry name" value="HELICASE_ATP_BIND_1"/>
    <property type="match status" value="1"/>
</dbReference>
<dbReference type="PROSITE" id="PS51194">
    <property type="entry name" value="HELICASE_CTER"/>
    <property type="match status" value="1"/>
</dbReference>
<dbReference type="PROSITE" id="PS51195">
    <property type="entry name" value="Q_MOTIF"/>
    <property type="match status" value="1"/>
</dbReference>
<proteinExistence type="inferred from homology"/>
<evidence type="ECO:0000250" key="1"/>
<evidence type="ECO:0000255" key="2">
    <source>
        <dbReference type="PROSITE-ProRule" id="PRU00541"/>
    </source>
</evidence>
<evidence type="ECO:0000255" key="3">
    <source>
        <dbReference type="PROSITE-ProRule" id="PRU00542"/>
    </source>
</evidence>
<evidence type="ECO:0000256" key="4">
    <source>
        <dbReference type="SAM" id="MobiDB-lite"/>
    </source>
</evidence>
<evidence type="ECO:0000305" key="5"/>
<protein>
    <recommendedName>
        <fullName>ATP-dependent RNA helicase DBP3</fullName>
        <ecNumber>3.6.4.13</ecNumber>
    </recommendedName>
</protein>